<protein>
    <recommendedName>
        <fullName>Cytochrome c-type biogenesis protein CcmE</fullName>
    </recommendedName>
    <alternativeName>
        <fullName>Cytochrome c maturation protein E</fullName>
    </alternativeName>
    <alternativeName>
        <fullName>Heme chaperone CcmE</fullName>
    </alternativeName>
</protein>
<proteinExistence type="inferred from homology"/>
<keyword id="KW-0997">Cell inner membrane</keyword>
<keyword id="KW-1003">Cell membrane</keyword>
<keyword id="KW-0201">Cytochrome c-type biogenesis</keyword>
<keyword id="KW-0349">Heme</keyword>
<keyword id="KW-0408">Iron</keyword>
<keyword id="KW-0472">Membrane</keyword>
<keyword id="KW-0479">Metal-binding</keyword>
<keyword id="KW-1185">Reference proteome</keyword>
<keyword id="KW-0735">Signal-anchor</keyword>
<keyword id="KW-0812">Transmembrane</keyword>
<keyword id="KW-1133">Transmembrane helix</keyword>
<dbReference type="EMBL" id="AY456185">
    <property type="protein sequence ID" value="AAS13482.1"/>
    <property type="molecule type" value="Genomic_DNA"/>
</dbReference>
<dbReference type="EMBL" id="AM889285">
    <property type="protein sequence ID" value="CAP57383.1"/>
    <property type="molecule type" value="Genomic_DNA"/>
</dbReference>
<dbReference type="EMBL" id="CP001189">
    <property type="protein sequence ID" value="ACI52664.1"/>
    <property type="molecule type" value="Genomic_DNA"/>
</dbReference>
<dbReference type="RefSeq" id="WP_012228035.1">
    <property type="nucleotide sequence ID" value="NC_010125.1"/>
</dbReference>
<dbReference type="SMR" id="Q69AY8"/>
<dbReference type="STRING" id="272568.GDI3440"/>
<dbReference type="KEGG" id="gdi:GDI3440"/>
<dbReference type="KEGG" id="gdj:Gdia_2933"/>
<dbReference type="eggNOG" id="COG2332">
    <property type="taxonomic scope" value="Bacteria"/>
</dbReference>
<dbReference type="HOGENOM" id="CLU_079503_1_1_5"/>
<dbReference type="OrthoDB" id="9793584at2"/>
<dbReference type="Proteomes" id="UP000001176">
    <property type="component" value="Chromosome"/>
</dbReference>
<dbReference type="GO" id="GO:0005886">
    <property type="term" value="C:plasma membrane"/>
    <property type="evidence" value="ECO:0007669"/>
    <property type="project" value="UniProtKB-SubCell"/>
</dbReference>
<dbReference type="GO" id="GO:0020037">
    <property type="term" value="F:heme binding"/>
    <property type="evidence" value="ECO:0007669"/>
    <property type="project" value="InterPro"/>
</dbReference>
<dbReference type="GO" id="GO:0046872">
    <property type="term" value="F:metal ion binding"/>
    <property type="evidence" value="ECO:0007669"/>
    <property type="project" value="UniProtKB-KW"/>
</dbReference>
<dbReference type="GO" id="GO:0017004">
    <property type="term" value="P:cytochrome complex assembly"/>
    <property type="evidence" value="ECO:0007669"/>
    <property type="project" value="UniProtKB-KW"/>
</dbReference>
<dbReference type="Gene3D" id="2.40.50.140">
    <property type="entry name" value="Nucleic acid-binding proteins"/>
    <property type="match status" value="1"/>
</dbReference>
<dbReference type="HAMAP" id="MF_01959">
    <property type="entry name" value="CcmE"/>
    <property type="match status" value="1"/>
</dbReference>
<dbReference type="InterPro" id="IPR004329">
    <property type="entry name" value="CcmE"/>
</dbReference>
<dbReference type="InterPro" id="IPR036127">
    <property type="entry name" value="CcmE-like_sf"/>
</dbReference>
<dbReference type="InterPro" id="IPR012340">
    <property type="entry name" value="NA-bd_OB-fold"/>
</dbReference>
<dbReference type="NCBIfam" id="NF009727">
    <property type="entry name" value="PRK13254.1-1"/>
    <property type="match status" value="1"/>
</dbReference>
<dbReference type="NCBIfam" id="NF009731">
    <property type="entry name" value="PRK13254.1-5"/>
    <property type="match status" value="1"/>
</dbReference>
<dbReference type="PANTHER" id="PTHR34128">
    <property type="entry name" value="CYTOCHROME C-TYPE BIOGENESIS PROTEIN CCME HOMOLOG, MITOCHONDRIAL"/>
    <property type="match status" value="1"/>
</dbReference>
<dbReference type="PANTHER" id="PTHR34128:SF2">
    <property type="entry name" value="CYTOCHROME C-TYPE BIOGENESIS PROTEIN CCME HOMOLOG, MITOCHONDRIAL"/>
    <property type="match status" value="1"/>
</dbReference>
<dbReference type="Pfam" id="PF03100">
    <property type="entry name" value="CcmE"/>
    <property type="match status" value="1"/>
</dbReference>
<dbReference type="SUPFAM" id="SSF82093">
    <property type="entry name" value="Heme chaperone CcmE"/>
    <property type="match status" value="1"/>
</dbReference>
<organism>
    <name type="scientific">Gluconacetobacter diazotrophicus (strain ATCC 49037 / DSM 5601 / CCUG 37298 / CIP 103539 / LMG 7603 / PAl5)</name>
    <dbReference type="NCBI Taxonomy" id="272568"/>
    <lineage>
        <taxon>Bacteria</taxon>
        <taxon>Pseudomonadati</taxon>
        <taxon>Pseudomonadota</taxon>
        <taxon>Alphaproteobacteria</taxon>
        <taxon>Acetobacterales</taxon>
        <taxon>Acetobacteraceae</taxon>
        <taxon>Gluconacetobacter</taxon>
    </lineage>
</organism>
<feature type="chain" id="PRO_0000238789" description="Cytochrome c-type biogenesis protein CcmE">
    <location>
        <begin position="1"/>
        <end position="173"/>
    </location>
</feature>
<feature type="topological domain" description="Cytoplasmic" evidence="2">
    <location>
        <begin position="1"/>
        <end position="7"/>
    </location>
</feature>
<feature type="transmembrane region" description="Helical; Signal-anchor for type II membrane protein" evidence="2">
    <location>
        <begin position="8"/>
        <end position="28"/>
    </location>
</feature>
<feature type="topological domain" description="Periplasmic" evidence="2">
    <location>
        <begin position="29"/>
        <end position="173"/>
    </location>
</feature>
<feature type="region of interest" description="Disordered" evidence="3">
    <location>
        <begin position="148"/>
        <end position="173"/>
    </location>
</feature>
<feature type="compositionally biased region" description="Basic and acidic residues" evidence="3">
    <location>
        <begin position="164"/>
        <end position="173"/>
    </location>
</feature>
<feature type="binding site" description="covalent" evidence="1">
    <location>
        <position position="125"/>
    </location>
    <ligand>
        <name>heme</name>
        <dbReference type="ChEBI" id="CHEBI:30413"/>
    </ligand>
</feature>
<feature type="binding site" description="axial binding residue" evidence="1">
    <location>
        <position position="129"/>
    </location>
    <ligand>
        <name>heme</name>
        <dbReference type="ChEBI" id="CHEBI:30413"/>
    </ligand>
    <ligandPart>
        <name>Fe</name>
        <dbReference type="ChEBI" id="CHEBI:18248"/>
    </ligandPart>
</feature>
<reference key="1">
    <citation type="journal article" date="2004" name="J. Bacteriol.">
        <title>Indole-3-acetic acid biosynthesis is deficient in Gluconacetobacter diazotrophicus strains with mutations in cytochrome c biogenesis genes.</title>
        <authorList>
            <person name="Lee S."/>
            <person name="Flores-Encarnacion M."/>
            <person name="Contreras-Zentella M."/>
            <person name="Garcia-Flores L."/>
            <person name="Escamilla J.E."/>
            <person name="Kennedy C."/>
        </authorList>
    </citation>
    <scope>NUCLEOTIDE SEQUENCE [GENOMIC DNA]</scope>
    <scope>FUNCTION</scope>
</reference>
<reference key="2">
    <citation type="journal article" date="2009" name="BMC Genomics">
        <title>Complete genome sequence of the sugarcane nitrogen-fixing endophyte Gluconacetobacter diazotrophicus Pal5.</title>
        <authorList>
            <person name="Bertalan M."/>
            <person name="Albano R."/>
            <person name="de Padua V."/>
            <person name="Rouws L."/>
            <person name="Rojas C."/>
            <person name="Hemerly A."/>
            <person name="Teixeira K."/>
            <person name="Schwab S."/>
            <person name="Araujo J."/>
            <person name="Oliveira A."/>
            <person name="Franca L."/>
            <person name="Magalhaes V."/>
            <person name="Alqueres S."/>
            <person name="Cardoso A."/>
            <person name="Almeida W."/>
            <person name="Loureiro M.M."/>
            <person name="Nogueira E."/>
            <person name="Cidade D."/>
            <person name="Oliveira D."/>
            <person name="Simao T."/>
            <person name="Macedo J."/>
            <person name="Valadao A."/>
            <person name="Dreschsel M."/>
            <person name="Freitas F."/>
            <person name="Vidal M."/>
            <person name="Guedes H."/>
            <person name="Rodrigues E."/>
            <person name="Meneses C."/>
            <person name="Brioso P."/>
            <person name="Pozzer L."/>
            <person name="Figueiredo D."/>
            <person name="Montano H."/>
            <person name="Junior J."/>
            <person name="de Souza Filho G."/>
            <person name="Martin Quintana Flores V."/>
            <person name="Ferreira B."/>
            <person name="Branco A."/>
            <person name="Gonzalez P."/>
            <person name="Guillobel H."/>
            <person name="Lemos M."/>
            <person name="Seibel L."/>
            <person name="Macedo J."/>
            <person name="Alves-Ferreira M."/>
            <person name="Sachetto-Martins G."/>
            <person name="Coelho A."/>
            <person name="Santos E."/>
            <person name="Amaral G."/>
            <person name="Neves A."/>
            <person name="Pacheco A.B."/>
            <person name="Carvalho D."/>
            <person name="Lery L."/>
            <person name="Bisch P."/>
            <person name="Rossle S.C."/>
            <person name="Urmenyi T."/>
            <person name="Rael Pereira A."/>
            <person name="Silva R."/>
            <person name="Rondinelli E."/>
            <person name="von Kruger W."/>
            <person name="Martins O."/>
            <person name="Baldani J.I."/>
            <person name="Ferreira P.C."/>
        </authorList>
    </citation>
    <scope>NUCLEOTIDE SEQUENCE [LARGE SCALE GENOMIC DNA]</scope>
    <source>
        <strain>ATCC 49037 / DSM 5601 / CCUG 37298 / CIP 103539 / LMG 7603 / PAl5</strain>
    </source>
</reference>
<reference key="3">
    <citation type="journal article" date="2010" name="Stand. Genomic Sci.">
        <title>Two genome sequences of the same bacterial strain, Gluconacetobacter diazotrophicus PAl 5, suggest a new standard in genome sequence submission.</title>
        <authorList>
            <person name="Giongo A."/>
            <person name="Tyler H.L."/>
            <person name="Zipperer U.N."/>
            <person name="Triplett E.W."/>
        </authorList>
    </citation>
    <scope>NUCLEOTIDE SEQUENCE [LARGE SCALE GENOMIC DNA]</scope>
    <source>
        <strain>ATCC 49037 / DSM 5601 / CCUG 37298 / CIP 103539 / LMG 7603 / PAl5</strain>
    </source>
</reference>
<comment type="function">
    <text evidence="1 4">Heme chaperone required for the biogenesis of c-type cytochromes. Transiently binds heme delivered by CcmC and transfers the heme to apo-cytochromes in a process facilitated by CcmF and CcmH (By similarity). Also required for indole-3-acetic acid (IAA) biosynthesis.</text>
</comment>
<comment type="subcellular location">
    <subcellularLocation>
        <location evidence="5">Cell inner membrane</location>
        <topology evidence="5">Single-pass type II membrane protein</topology>
        <orientation evidence="5">Periplasmic side</orientation>
    </subcellularLocation>
</comment>
<comment type="similarity">
    <text evidence="5">Belongs to the CcmE/CycJ family.</text>
</comment>
<name>CCME_GLUDA</name>
<gene>
    <name type="primary">ccmE</name>
    <name type="synonym">cycJ</name>
    <name type="ordered locus">GDI3440</name>
    <name type="ordered locus">Gdia_2933</name>
</gene>
<accession>Q69AY8</accession>
<accession>A9H406</accession>
<accession>B5ZID1</accession>
<evidence type="ECO:0000250" key="1"/>
<evidence type="ECO:0000255" key="2"/>
<evidence type="ECO:0000256" key="3">
    <source>
        <dbReference type="SAM" id="MobiDB-lite"/>
    </source>
</evidence>
<evidence type="ECO:0000269" key="4">
    <source>
    </source>
</evidence>
<evidence type="ECO:0000305" key="5"/>
<sequence length="173" mass="18539">MTRKSRRLWLVGACLLGLGTATALVLNAFSSNIVFFMAPSQVRAHPPAADRTIRLGGMVVAGSVRRQTQGDTPIALFDVTDGQAAVTVRYAGILPDLFREGQSVVAVGTVAPDGAFRASEVLAKHDETYMPKEVAEALRRSGKWDPRYGKAPDAASWNTMTVGDARHGEANRS</sequence>